<accession>Q9DUB8</accession>
<evidence type="ECO:0000256" key="1">
    <source>
        <dbReference type="SAM" id="MobiDB-lite"/>
    </source>
</evidence>
<name>ORF2_TTVZ1</name>
<organismHost>
    <name type="scientific">Aotus trivirgatus</name>
    <name type="common">Three-striped night monkey</name>
    <name type="synonym">Douroucouli</name>
    <dbReference type="NCBI Taxonomy" id="9505"/>
</organismHost>
<sequence length="130" mass="13841">MGDWFMQGSPPDFAVQEDRWLKAVESCHQLFCSCSSAWDHLRNILQTRGYWPQGPPPYRSEPHTEHSRPPPPKKRRPWCGGDGGGDAGAGPSGVAGTAAGGAGGDGAVGPVEEDDPTVADLIAAMEEDER</sequence>
<organism>
    <name type="scientific">Torque teno douroucouli virus (isolate At-TTV3)</name>
    <dbReference type="NCBI Taxonomy" id="766187"/>
    <lineage>
        <taxon>Viruses</taxon>
        <taxon>Viruses incertae sedis</taxon>
        <taxon>Anelloviridae</taxon>
        <taxon>Zetatorquevirus</taxon>
        <taxon>Zetatorquevirus aotid1</taxon>
    </lineage>
</organism>
<reference key="1">
    <citation type="journal article" date="2000" name="Virology">
        <title>Species-specific TT viruses in humans and nonhuman primates and their phylogenetic relatedness.</title>
        <authorList>
            <person name="Okamoto H."/>
            <person name="Nishizawa T."/>
            <person name="Tawara A."/>
            <person name="Peng Y."/>
            <person name="Takahashi M."/>
            <person name="Kishimoto J."/>
            <person name="Tanaka T."/>
            <person name="Miyakawa Y."/>
            <person name="Mayumi M."/>
        </authorList>
    </citation>
    <scope>NUCLEOTIDE SEQUENCE [GENOMIC DNA]</scope>
</reference>
<gene>
    <name type="ORF">ORF2</name>
</gene>
<proteinExistence type="predicted"/>
<keyword id="KW-1185">Reference proteome</keyword>
<dbReference type="EMBL" id="AB041961">
    <property type="protein sequence ID" value="BAB19319.1"/>
    <property type="molecule type" value="Genomic_DNA"/>
</dbReference>
<dbReference type="RefSeq" id="YP_003587886.1">
    <property type="nucleotide sequence ID" value="NC_014087.1"/>
</dbReference>
<dbReference type="KEGG" id="vg:9086659"/>
<dbReference type="Proteomes" id="UP000007080">
    <property type="component" value="Segment"/>
</dbReference>
<dbReference type="InterPro" id="IPR004118">
    <property type="entry name" value="HEV_TT_vir_Orf2/Gyrovir_Vp2_N"/>
</dbReference>
<dbReference type="Pfam" id="PF02957">
    <property type="entry name" value="TT_ORF2-like"/>
    <property type="match status" value="1"/>
</dbReference>
<feature type="chain" id="PRO_0000404286" description="Uncharacterized ORF2 protein">
    <location>
        <begin position="1"/>
        <end position="130"/>
    </location>
</feature>
<feature type="region of interest" description="Disordered" evidence="1">
    <location>
        <begin position="48"/>
        <end position="130"/>
    </location>
</feature>
<feature type="compositionally biased region" description="Gly residues" evidence="1">
    <location>
        <begin position="80"/>
        <end position="107"/>
    </location>
</feature>
<protein>
    <recommendedName>
        <fullName>Uncharacterized ORF2 protein</fullName>
    </recommendedName>
</protein>